<comment type="similarity">
    <text evidence="6">Belongs to the vitamin-B12 dependent methionine synthase family.</text>
</comment>
<comment type="sequence caution" evidence="6">
    <conflict type="frameshift">
        <sequence resource="EMBL" id="L42023"/>
    </conflict>
</comment>
<name>Y1042_HAEIN</name>
<feature type="chain" id="PRO_0000204544" description="Uncharacterized protein HI_1042">
    <location>
        <begin position="1"/>
        <end position="617"/>
    </location>
</feature>
<feature type="domain" description="B12-binding N-terminal" evidence="5">
    <location>
        <begin position="33"/>
        <end position="134"/>
    </location>
</feature>
<feature type="domain" description="B12-binding" evidence="4">
    <location>
        <begin position="136"/>
        <end position="272"/>
    </location>
</feature>
<feature type="domain" description="AdoMet activation" evidence="3">
    <location>
        <begin position="288"/>
        <end position="617"/>
    </location>
</feature>
<feature type="binding site" evidence="2">
    <location>
        <position position="84"/>
    </location>
    <ligand>
        <name>methylcob(III)alamin</name>
        <dbReference type="ChEBI" id="CHEBI:28115"/>
    </ligand>
</feature>
<feature type="binding site" evidence="2">
    <location>
        <begin position="146"/>
        <end position="150"/>
    </location>
    <ligand>
        <name>methylcob(III)alamin</name>
        <dbReference type="ChEBI" id="CHEBI:28115"/>
    </ligand>
</feature>
<feature type="binding site" description="axial binding residue" evidence="2">
    <location>
        <position position="149"/>
    </location>
    <ligand>
        <name>methylcob(III)alamin</name>
        <dbReference type="ChEBI" id="CHEBI:28115"/>
    </ligand>
    <ligandPart>
        <name>Co</name>
        <dbReference type="ChEBI" id="CHEBI:27638"/>
    </ligandPart>
</feature>
<feature type="binding site" evidence="2">
    <location>
        <position position="194"/>
    </location>
    <ligand>
        <name>methylcob(III)alamin</name>
        <dbReference type="ChEBI" id="CHEBI:28115"/>
    </ligand>
</feature>
<feature type="binding site" evidence="2">
    <location>
        <position position="198"/>
    </location>
    <ligand>
        <name>methylcob(III)alamin</name>
        <dbReference type="ChEBI" id="CHEBI:28115"/>
    </ligand>
</feature>
<feature type="binding site" evidence="2">
    <location>
        <position position="251"/>
    </location>
    <ligand>
        <name>methylcob(III)alamin</name>
        <dbReference type="ChEBI" id="CHEBI:28115"/>
    </ligand>
</feature>
<feature type="binding site" evidence="1">
    <location>
        <position position="337"/>
    </location>
    <ligand>
        <name>S-adenosyl-L-methionine</name>
        <dbReference type="ChEBI" id="CHEBI:59789"/>
    </ligand>
</feature>
<feature type="binding site" evidence="1">
    <location>
        <position position="528"/>
    </location>
    <ligand>
        <name>S-adenosyl-L-methionine</name>
        <dbReference type="ChEBI" id="CHEBI:59789"/>
    </ligand>
</feature>
<feature type="binding site" evidence="1">
    <location>
        <begin position="583"/>
        <end position="584"/>
    </location>
    <ligand>
        <name>S-adenosyl-L-methionine</name>
        <dbReference type="ChEBI" id="CHEBI:59789"/>
    </ligand>
</feature>
<reference key="1">
    <citation type="journal article" date="1995" name="Science">
        <title>Whole-genome random sequencing and assembly of Haemophilus influenzae Rd.</title>
        <authorList>
            <person name="Fleischmann R.D."/>
            <person name="Adams M.D."/>
            <person name="White O."/>
            <person name="Clayton R.A."/>
            <person name="Kirkness E.F."/>
            <person name="Kerlavage A.R."/>
            <person name="Bult C.J."/>
            <person name="Tomb J.-F."/>
            <person name="Dougherty B.A."/>
            <person name="Merrick J.M."/>
            <person name="McKenney K."/>
            <person name="Sutton G.G."/>
            <person name="FitzHugh W."/>
            <person name="Fields C.A."/>
            <person name="Gocayne J.D."/>
            <person name="Scott J.D."/>
            <person name="Shirley R."/>
            <person name="Liu L.-I."/>
            <person name="Glodek A."/>
            <person name="Kelley J.M."/>
            <person name="Weidman J.F."/>
            <person name="Phillips C.A."/>
            <person name="Spriggs T."/>
            <person name="Hedblom E."/>
            <person name="Cotton M.D."/>
            <person name="Utterback T.R."/>
            <person name="Hanna M.C."/>
            <person name="Nguyen D.T."/>
            <person name="Saudek D.M."/>
            <person name="Brandon R.C."/>
            <person name="Fine L.D."/>
            <person name="Fritchman J.L."/>
            <person name="Fuhrmann J.L."/>
            <person name="Geoghagen N.S.M."/>
            <person name="Gnehm C.L."/>
            <person name="McDonald L.A."/>
            <person name="Small K.V."/>
            <person name="Fraser C.M."/>
            <person name="Smith H.O."/>
            <person name="Venter J.C."/>
        </authorList>
    </citation>
    <scope>NUCLEOTIDE SEQUENCE [LARGE SCALE GENOMIC DNA]</scope>
    <source>
        <strain>ATCC 51907 / DSM 11121 / KW20 / Rd</strain>
    </source>
</reference>
<evidence type="ECO:0000250" key="1"/>
<evidence type="ECO:0000250" key="2">
    <source>
        <dbReference type="UniProtKB" id="P13009"/>
    </source>
</evidence>
<evidence type="ECO:0000255" key="3">
    <source>
        <dbReference type="PROSITE-ProRule" id="PRU00346"/>
    </source>
</evidence>
<evidence type="ECO:0000255" key="4">
    <source>
        <dbReference type="PROSITE-ProRule" id="PRU00666"/>
    </source>
</evidence>
<evidence type="ECO:0000255" key="5">
    <source>
        <dbReference type="PROSITE-ProRule" id="PRU00667"/>
    </source>
</evidence>
<evidence type="ECO:0000305" key="6"/>
<gene>
    <name type="ordered locus">HI_1042</name>
</gene>
<dbReference type="EMBL" id="L42023">
    <property type="status" value="NOT_ANNOTATED_CDS"/>
    <property type="molecule type" value="Genomic_DNA"/>
</dbReference>
<dbReference type="PIR" id="A61646">
    <property type="entry name" value="A61646"/>
</dbReference>
<dbReference type="PhylomeDB" id="Q57195"/>
<dbReference type="Proteomes" id="UP000000579">
    <property type="component" value="Chromosome"/>
</dbReference>
<dbReference type="GO" id="GO:0031419">
    <property type="term" value="F:cobalamin binding"/>
    <property type="evidence" value="ECO:0007669"/>
    <property type="project" value="InterPro"/>
</dbReference>
<dbReference type="GO" id="GO:0046872">
    <property type="term" value="F:metal ion binding"/>
    <property type="evidence" value="ECO:0007669"/>
    <property type="project" value="UniProtKB-KW"/>
</dbReference>
<dbReference type="GO" id="GO:0008705">
    <property type="term" value="F:methionine synthase activity"/>
    <property type="evidence" value="ECO:0007669"/>
    <property type="project" value="InterPro"/>
</dbReference>
<dbReference type="CDD" id="cd02069">
    <property type="entry name" value="methionine_synthase_B12_BD"/>
    <property type="match status" value="1"/>
</dbReference>
<dbReference type="FunFam" id="1.10.1240.10:FF:000001">
    <property type="entry name" value="Methionine synthase"/>
    <property type="match status" value="1"/>
</dbReference>
<dbReference type="FunFam" id="3.40.50.280:FF:000006">
    <property type="entry name" value="Methionine synthase (B12-dependent)"/>
    <property type="match status" value="1"/>
</dbReference>
<dbReference type="Gene3D" id="3.40.50.280">
    <property type="entry name" value="Cobalamin-binding domain"/>
    <property type="match status" value="1"/>
</dbReference>
<dbReference type="Gene3D" id="1.10.288.10">
    <property type="entry name" value="Cobalamin-dependent Methionine Synthase, domain 2"/>
    <property type="match status" value="1"/>
</dbReference>
<dbReference type="Gene3D" id="3.20.20.330">
    <property type="entry name" value="Homocysteine-binding-like domain"/>
    <property type="match status" value="1"/>
</dbReference>
<dbReference type="Gene3D" id="1.10.1240.10">
    <property type="entry name" value="Methionine synthase domain"/>
    <property type="match status" value="1"/>
</dbReference>
<dbReference type="Gene3D" id="3.10.196.10">
    <property type="entry name" value="Vitamin B12-dependent methionine synthase, activation domain"/>
    <property type="match status" value="1"/>
</dbReference>
<dbReference type="InterPro" id="IPR003759">
    <property type="entry name" value="Cbl-bd_cap"/>
</dbReference>
<dbReference type="InterPro" id="IPR006158">
    <property type="entry name" value="Cobalamin-bd"/>
</dbReference>
<dbReference type="InterPro" id="IPR036724">
    <property type="entry name" value="Cobalamin-bd_sf"/>
</dbReference>
<dbReference type="InterPro" id="IPR036589">
    <property type="entry name" value="HCY_dom_sf"/>
</dbReference>
<dbReference type="InterPro" id="IPR050554">
    <property type="entry name" value="Met_Synthase/Corrinoid"/>
</dbReference>
<dbReference type="InterPro" id="IPR033706">
    <property type="entry name" value="Met_synthase_B12-bd"/>
</dbReference>
<dbReference type="InterPro" id="IPR036594">
    <property type="entry name" value="Meth_synthase_dom"/>
</dbReference>
<dbReference type="InterPro" id="IPR004223">
    <property type="entry name" value="VitB12-dep_Met_synth_activ_dom"/>
</dbReference>
<dbReference type="InterPro" id="IPR037010">
    <property type="entry name" value="VitB12-dep_Met_synth_activ_sf"/>
</dbReference>
<dbReference type="PANTHER" id="PTHR45833">
    <property type="entry name" value="METHIONINE SYNTHASE"/>
    <property type="match status" value="1"/>
</dbReference>
<dbReference type="PANTHER" id="PTHR45833:SF1">
    <property type="entry name" value="METHIONINE SYNTHASE"/>
    <property type="match status" value="1"/>
</dbReference>
<dbReference type="Pfam" id="PF02310">
    <property type="entry name" value="B12-binding"/>
    <property type="match status" value="1"/>
</dbReference>
<dbReference type="Pfam" id="PF02607">
    <property type="entry name" value="B12-binding_2"/>
    <property type="match status" value="1"/>
</dbReference>
<dbReference type="Pfam" id="PF02965">
    <property type="entry name" value="Met_synt_B12"/>
    <property type="match status" value="1"/>
</dbReference>
<dbReference type="SMART" id="SM01018">
    <property type="entry name" value="B12-binding_2"/>
    <property type="match status" value="1"/>
</dbReference>
<dbReference type="SUPFAM" id="SSF52242">
    <property type="entry name" value="Cobalamin (vitamin B12)-binding domain"/>
    <property type="match status" value="1"/>
</dbReference>
<dbReference type="SUPFAM" id="SSF82282">
    <property type="entry name" value="Homocysteine S-methyltransferase"/>
    <property type="match status" value="1"/>
</dbReference>
<dbReference type="SUPFAM" id="SSF56507">
    <property type="entry name" value="Methionine synthase activation domain-like"/>
    <property type="match status" value="1"/>
</dbReference>
<dbReference type="SUPFAM" id="SSF47644">
    <property type="entry name" value="Methionine synthase domain"/>
    <property type="match status" value="1"/>
</dbReference>
<dbReference type="PROSITE" id="PS50974">
    <property type="entry name" value="ADOMET_ACTIVATION"/>
    <property type="match status" value="1"/>
</dbReference>
<dbReference type="PROSITE" id="PS51332">
    <property type="entry name" value="B12_BINDING"/>
    <property type="match status" value="1"/>
</dbReference>
<dbReference type="PROSITE" id="PS51337">
    <property type="entry name" value="B12_BINDING_NTER"/>
    <property type="match status" value="1"/>
</dbReference>
<proteinExistence type="inferred from homology"/>
<accession>Q57195</accession>
<accession>P96337</accession>
<sequence length="617" mass="69414">MVNKTAQLKQALENRILILDGAMGTMIQKYKLTEDDFRGEKFKKSAVDSVAEWCTWPVGELLKHALVKGITTCQTLPSPLDVIEGPLMAGMDVVGDLFGDGKMFLPQVVKSARVMKQSVAYLEPFXNATKQKGSSNGKVVIATVKGDVHDIGKNIVSVVMQCNNFEVIDLGVMVPADKIIQTAINQKTDIIALSGLITPSLDEMEYFLGEMTRLGLNLPVMIGGATTSKEHTAIKLYPKYKQHCVFYTSNASRAVTVCATLMNPEGRAALWEQFKKDYEKIQQSFANSKPLRKQLSIEEARDGFSGEWADYVPPTPKQTGIVEFKNVPIAELRKFIDWSPFFRIWGLMGCYPDAFDYPEGGEEARKVWNDAQVVLDELEQNHKLNPSGILGIFPAERVGDDVVLFSDEERTQTIGTAYGLRQQTERGKNSKSPFNFCLSDFIADRQSGKKNWFGMFAVCVGVEEMELVEGYKAAGDDYNAILLQAVGDRLAEAMAEYLHFELRTRIWGYTQEEFDNQGLINENYVGIRPAPGYPSWPEHTEKALIWDLLEVEQRIGMKLTESYAMWPAASVCGWYFTHPASNYFTLGRIDEDQAQDYAKRKGWDEREMMKWLGVAMK</sequence>
<organism>
    <name type="scientific">Haemophilus influenzae (strain ATCC 51907 / DSM 11121 / KW20 / Rd)</name>
    <dbReference type="NCBI Taxonomy" id="71421"/>
    <lineage>
        <taxon>Bacteria</taxon>
        <taxon>Pseudomonadati</taxon>
        <taxon>Pseudomonadota</taxon>
        <taxon>Gammaproteobacteria</taxon>
        <taxon>Pasteurellales</taxon>
        <taxon>Pasteurellaceae</taxon>
        <taxon>Haemophilus</taxon>
    </lineage>
</organism>
<keyword id="KW-0170">Cobalt</keyword>
<keyword id="KW-0479">Metal-binding</keyword>
<keyword id="KW-1185">Reference proteome</keyword>
<keyword id="KW-0677">Repeat</keyword>
<keyword id="KW-0949">S-adenosyl-L-methionine</keyword>
<protein>
    <recommendedName>
        <fullName>Uncharacterized protein HI_1042</fullName>
    </recommendedName>
</protein>